<sequence length="200" mass="23256">MKEIYLIGLGNPGKKFLNSRHNIGFLLLEYFSKKYNSNFLFKDKLKSSYSEFQIDNSSYRLFLPNTFMNNSGYAVRAIVDWYKINLDQIFIIVDDKDLPLGKIRFRRKGSSGGHNGLKSIIEQLQTQKFKRIRIGIGSPPPIKGEKNFNTISHVLGNISLEEKSILDKVFRRVIESLEKLNTKKEEYIINELNSFDKDQH</sequence>
<accession>A8G2Q9</accession>
<protein>
    <recommendedName>
        <fullName evidence="1">Peptidyl-tRNA hydrolase</fullName>
        <shortName evidence="1">Pth</shortName>
        <ecNumber evidence="1">3.1.1.29</ecNumber>
    </recommendedName>
</protein>
<evidence type="ECO:0000255" key="1">
    <source>
        <dbReference type="HAMAP-Rule" id="MF_00083"/>
    </source>
</evidence>
<proteinExistence type="inferred from homology"/>
<organism>
    <name type="scientific">Prochlorococcus marinus (strain MIT 9215)</name>
    <dbReference type="NCBI Taxonomy" id="93060"/>
    <lineage>
        <taxon>Bacteria</taxon>
        <taxon>Bacillati</taxon>
        <taxon>Cyanobacteriota</taxon>
        <taxon>Cyanophyceae</taxon>
        <taxon>Synechococcales</taxon>
        <taxon>Prochlorococcaceae</taxon>
        <taxon>Prochlorococcus</taxon>
    </lineage>
</organism>
<dbReference type="EC" id="3.1.1.29" evidence="1"/>
<dbReference type="EMBL" id="CP000825">
    <property type="protein sequence ID" value="ABV49890.1"/>
    <property type="molecule type" value="Genomic_DNA"/>
</dbReference>
<dbReference type="RefSeq" id="WP_012007051.1">
    <property type="nucleotide sequence ID" value="NC_009840.1"/>
</dbReference>
<dbReference type="SMR" id="A8G2Q9"/>
<dbReference type="STRING" id="93060.P9215_02731"/>
<dbReference type="KEGG" id="pmh:P9215_02731"/>
<dbReference type="eggNOG" id="COG0193">
    <property type="taxonomic scope" value="Bacteria"/>
</dbReference>
<dbReference type="HOGENOM" id="CLU_062456_4_1_3"/>
<dbReference type="OrthoDB" id="9800507at2"/>
<dbReference type="Proteomes" id="UP000002014">
    <property type="component" value="Chromosome"/>
</dbReference>
<dbReference type="GO" id="GO:0005737">
    <property type="term" value="C:cytoplasm"/>
    <property type="evidence" value="ECO:0007669"/>
    <property type="project" value="UniProtKB-SubCell"/>
</dbReference>
<dbReference type="GO" id="GO:0004045">
    <property type="term" value="F:peptidyl-tRNA hydrolase activity"/>
    <property type="evidence" value="ECO:0007669"/>
    <property type="project" value="UniProtKB-UniRule"/>
</dbReference>
<dbReference type="GO" id="GO:0000049">
    <property type="term" value="F:tRNA binding"/>
    <property type="evidence" value="ECO:0007669"/>
    <property type="project" value="UniProtKB-UniRule"/>
</dbReference>
<dbReference type="GO" id="GO:0006515">
    <property type="term" value="P:protein quality control for misfolded or incompletely synthesized proteins"/>
    <property type="evidence" value="ECO:0007669"/>
    <property type="project" value="UniProtKB-UniRule"/>
</dbReference>
<dbReference type="GO" id="GO:0072344">
    <property type="term" value="P:rescue of stalled ribosome"/>
    <property type="evidence" value="ECO:0007669"/>
    <property type="project" value="UniProtKB-UniRule"/>
</dbReference>
<dbReference type="CDD" id="cd00462">
    <property type="entry name" value="PTH"/>
    <property type="match status" value="1"/>
</dbReference>
<dbReference type="FunFam" id="3.40.50.1470:FF:000001">
    <property type="entry name" value="Peptidyl-tRNA hydrolase"/>
    <property type="match status" value="1"/>
</dbReference>
<dbReference type="Gene3D" id="3.40.50.1470">
    <property type="entry name" value="Peptidyl-tRNA hydrolase"/>
    <property type="match status" value="1"/>
</dbReference>
<dbReference type="HAMAP" id="MF_00083">
    <property type="entry name" value="Pept_tRNA_hydro_bact"/>
    <property type="match status" value="1"/>
</dbReference>
<dbReference type="InterPro" id="IPR001328">
    <property type="entry name" value="Pept_tRNA_hydro"/>
</dbReference>
<dbReference type="InterPro" id="IPR018171">
    <property type="entry name" value="Pept_tRNA_hydro_CS"/>
</dbReference>
<dbReference type="InterPro" id="IPR036416">
    <property type="entry name" value="Pept_tRNA_hydro_sf"/>
</dbReference>
<dbReference type="NCBIfam" id="TIGR00447">
    <property type="entry name" value="pth"/>
    <property type="match status" value="1"/>
</dbReference>
<dbReference type="PANTHER" id="PTHR17224">
    <property type="entry name" value="PEPTIDYL-TRNA HYDROLASE"/>
    <property type="match status" value="1"/>
</dbReference>
<dbReference type="PANTHER" id="PTHR17224:SF1">
    <property type="entry name" value="PEPTIDYL-TRNA HYDROLASE"/>
    <property type="match status" value="1"/>
</dbReference>
<dbReference type="Pfam" id="PF01195">
    <property type="entry name" value="Pept_tRNA_hydro"/>
    <property type="match status" value="1"/>
</dbReference>
<dbReference type="SUPFAM" id="SSF53178">
    <property type="entry name" value="Peptidyl-tRNA hydrolase-like"/>
    <property type="match status" value="1"/>
</dbReference>
<dbReference type="PROSITE" id="PS01196">
    <property type="entry name" value="PEPT_TRNA_HYDROL_2"/>
    <property type="match status" value="1"/>
</dbReference>
<reference key="1">
    <citation type="journal article" date="2007" name="PLoS Genet.">
        <title>Patterns and implications of gene gain and loss in the evolution of Prochlorococcus.</title>
        <authorList>
            <person name="Kettler G.C."/>
            <person name="Martiny A.C."/>
            <person name="Huang K."/>
            <person name="Zucker J."/>
            <person name="Coleman M.L."/>
            <person name="Rodrigue S."/>
            <person name="Chen F."/>
            <person name="Lapidus A."/>
            <person name="Ferriera S."/>
            <person name="Johnson J."/>
            <person name="Steglich C."/>
            <person name="Church G.M."/>
            <person name="Richardson P."/>
            <person name="Chisholm S.W."/>
        </authorList>
    </citation>
    <scope>NUCLEOTIDE SEQUENCE [LARGE SCALE GENOMIC DNA]</scope>
    <source>
        <strain>MIT 9215</strain>
    </source>
</reference>
<keyword id="KW-0963">Cytoplasm</keyword>
<keyword id="KW-0378">Hydrolase</keyword>
<keyword id="KW-0694">RNA-binding</keyword>
<keyword id="KW-0820">tRNA-binding</keyword>
<feature type="chain" id="PRO_1000057553" description="Peptidyl-tRNA hydrolase">
    <location>
        <begin position="1"/>
        <end position="200"/>
    </location>
</feature>
<feature type="active site" description="Proton acceptor" evidence="1">
    <location>
        <position position="21"/>
    </location>
</feature>
<feature type="binding site" evidence="1">
    <location>
        <position position="16"/>
    </location>
    <ligand>
        <name>tRNA</name>
        <dbReference type="ChEBI" id="CHEBI:17843"/>
    </ligand>
</feature>
<feature type="binding site" evidence="1">
    <location>
        <position position="67"/>
    </location>
    <ligand>
        <name>tRNA</name>
        <dbReference type="ChEBI" id="CHEBI:17843"/>
    </ligand>
</feature>
<feature type="binding site" evidence="1">
    <location>
        <position position="69"/>
    </location>
    <ligand>
        <name>tRNA</name>
        <dbReference type="ChEBI" id="CHEBI:17843"/>
    </ligand>
</feature>
<feature type="binding site" evidence="1">
    <location>
        <position position="115"/>
    </location>
    <ligand>
        <name>tRNA</name>
        <dbReference type="ChEBI" id="CHEBI:17843"/>
    </ligand>
</feature>
<feature type="site" description="Discriminates between blocked and unblocked aminoacyl-tRNA" evidence="1">
    <location>
        <position position="11"/>
    </location>
</feature>
<feature type="site" description="Stabilizes the basic form of H active site to accept a proton" evidence="1">
    <location>
        <position position="94"/>
    </location>
</feature>
<comment type="function">
    <text evidence="1">Hydrolyzes ribosome-free peptidyl-tRNAs (with 1 or more amino acids incorporated), which drop off the ribosome during protein synthesis, or as a result of ribosome stalling.</text>
</comment>
<comment type="function">
    <text evidence="1">Catalyzes the release of premature peptidyl moieties from peptidyl-tRNA molecules trapped in stalled 50S ribosomal subunits, and thus maintains levels of free tRNAs and 50S ribosomes.</text>
</comment>
<comment type="catalytic activity">
    <reaction evidence="1">
        <text>an N-acyl-L-alpha-aminoacyl-tRNA + H2O = an N-acyl-L-amino acid + a tRNA + H(+)</text>
        <dbReference type="Rhea" id="RHEA:54448"/>
        <dbReference type="Rhea" id="RHEA-COMP:10123"/>
        <dbReference type="Rhea" id="RHEA-COMP:13883"/>
        <dbReference type="ChEBI" id="CHEBI:15377"/>
        <dbReference type="ChEBI" id="CHEBI:15378"/>
        <dbReference type="ChEBI" id="CHEBI:59874"/>
        <dbReference type="ChEBI" id="CHEBI:78442"/>
        <dbReference type="ChEBI" id="CHEBI:138191"/>
        <dbReference type="EC" id="3.1.1.29"/>
    </reaction>
</comment>
<comment type="subunit">
    <text evidence="1">Monomer.</text>
</comment>
<comment type="subcellular location">
    <subcellularLocation>
        <location evidence="1">Cytoplasm</location>
    </subcellularLocation>
</comment>
<comment type="similarity">
    <text evidence="1">Belongs to the PTH family.</text>
</comment>
<name>PTH_PROM2</name>
<gene>
    <name evidence="1" type="primary">pth</name>
    <name type="ordered locus">P9215_02731</name>
</gene>